<comment type="function">
    <text evidence="2 4">Dihydroxyacid dehydratase that catalyzes the third step in the common pathway leading to biosynthesis of branched-chain amino acids (PubMed:23028460). Catalyzes the dehydration of (2R,3R)-2,3-dihydroxy-3-methylpentanoate (2,3-dihydroxy-3-methylvalerate) into 2-oxo-3-methylpentanoate (2-oxo-3-methylvalerate) and of (2R)-2,3-dihydroxy-3-methylbutanoate (2,3-dihydroxyisovalerate) into 2-oxo-3-methylbutanoate (2-oxoisovalerate), the penultimate precursor to L-isoleucine and L-valine, respectively (By similarity). IlvC and the branched-chain amino acid biosynthesis are crucial for virulence and may be a potential target to develop antifungal agents (PubMed:23028460).</text>
</comment>
<comment type="catalytic activity">
    <reaction evidence="2">
        <text>(2R)-2,3-dihydroxy-3-methylbutanoate = 3-methyl-2-oxobutanoate + H2O</text>
        <dbReference type="Rhea" id="RHEA:24809"/>
        <dbReference type="ChEBI" id="CHEBI:11851"/>
        <dbReference type="ChEBI" id="CHEBI:15377"/>
        <dbReference type="ChEBI" id="CHEBI:49072"/>
        <dbReference type="EC" id="4.2.1.9"/>
    </reaction>
    <physiologicalReaction direction="left-to-right" evidence="2">
        <dbReference type="Rhea" id="RHEA:24810"/>
    </physiologicalReaction>
</comment>
<comment type="catalytic activity">
    <reaction evidence="1">
        <text>(2R,3R)-2,3-dihydroxy-3-methylpentanoate = (S)-3-methyl-2-oxopentanoate + H2O</text>
        <dbReference type="Rhea" id="RHEA:27694"/>
        <dbReference type="ChEBI" id="CHEBI:15377"/>
        <dbReference type="ChEBI" id="CHEBI:35146"/>
        <dbReference type="ChEBI" id="CHEBI:49258"/>
        <dbReference type="EC" id="4.2.1.9"/>
    </reaction>
    <physiologicalReaction direction="left-to-right" evidence="1">
        <dbReference type="Rhea" id="RHEA:27695"/>
    </physiologicalReaction>
</comment>
<comment type="cofactor">
    <cofactor evidence="2">
        <name>[2Fe-2S] cluster</name>
        <dbReference type="ChEBI" id="CHEBI:190135"/>
    </cofactor>
    <text evidence="2">Binds 1 [2Fe-2S] cluster per subunit.</text>
</comment>
<comment type="cofactor">
    <cofactor evidence="3">
        <name>Mg(2+)</name>
        <dbReference type="ChEBI" id="CHEBI:18420"/>
    </cofactor>
</comment>
<comment type="activity regulation">
    <text evidence="4">DHAD activity is inhibited in dose-dependent manner by 2-hydroxy-3-methylbutyric acid with an IC(50) of about 8 mM.</text>
</comment>
<comment type="biophysicochemical properties">
    <kinetics>
        <KM evidence="4">10.1 mM for L-threonate</KM>
        <Vmax evidence="4">18.0 umol/min/mg enzyme using the non-natural substrate L-threonate</Vmax>
    </kinetics>
</comment>
<comment type="pathway">
    <text evidence="4">Amino-acid biosynthesis; L-isoleucine biosynthesis; L-isoleucine from 2-oxobutanoate: step 3/4.</text>
</comment>
<comment type="pathway">
    <text evidence="4">Amino-acid biosynthesis; L-valine biosynthesis; L-valine from pyruvate: step 3/4.</text>
</comment>
<comment type="subcellular location">
    <subcellularLocation>
        <location evidence="2">Mitochondrion</location>
    </subcellularLocation>
</comment>
<comment type="disruption phenotype">
    <text evidence="4">Requires supplementation with isoleucine and valine for growth (PubMed:23028460). Results in considerably lower kidney tissue burden in murine infection models (PubMed:23028460).</text>
</comment>
<comment type="similarity">
    <text evidence="6">Belongs to the IlvD/Edd family.</text>
</comment>
<feature type="chain" id="PRO_0000453258" description="Dihydroxy-acid dehydratase ilvC, mitochondrial">
    <location>
        <begin position="1"/>
        <end position="606"/>
    </location>
</feature>
<feature type="active site" description="Proton acceptor" evidence="3">
    <location>
        <position position="511"/>
    </location>
</feature>
<feature type="binding site" evidence="3">
    <location>
        <position position="84"/>
    </location>
    <ligand>
        <name>[2Fe-2S] cluster</name>
        <dbReference type="ChEBI" id="CHEBI:190135"/>
    </ligand>
</feature>
<feature type="binding site" evidence="3">
    <location>
        <position position="116"/>
    </location>
    <ligand>
        <name>Mg(2+)</name>
        <dbReference type="ChEBI" id="CHEBI:18420"/>
    </ligand>
</feature>
<feature type="binding site" evidence="3">
    <location>
        <position position="157"/>
    </location>
    <ligand>
        <name>[2Fe-2S] cluster</name>
        <dbReference type="ChEBI" id="CHEBI:190135"/>
    </ligand>
</feature>
<feature type="binding site" evidence="3">
    <location>
        <position position="158"/>
    </location>
    <ligand>
        <name>Mg(2+)</name>
        <dbReference type="ChEBI" id="CHEBI:18420"/>
    </ligand>
</feature>
<feature type="binding site" evidence="3">
    <location>
        <position position="232"/>
    </location>
    <ligand>
        <name>[2Fe-2S] cluster</name>
        <dbReference type="ChEBI" id="CHEBI:190135"/>
    </ligand>
</feature>
<feature type="binding site" evidence="3">
    <location>
        <position position="485"/>
    </location>
    <ligand>
        <name>Mg(2+)</name>
        <dbReference type="ChEBI" id="CHEBI:18420"/>
    </ligand>
</feature>
<dbReference type="EC" id="4.2.1.9" evidence="2"/>
<dbReference type="EMBL" id="AAHF01000001">
    <property type="protein sequence ID" value="EAL93716.2"/>
    <property type="molecule type" value="Genomic_DNA"/>
</dbReference>
<dbReference type="RefSeq" id="XP_755754.2">
    <property type="nucleotide sequence ID" value="XM_750661.2"/>
</dbReference>
<dbReference type="SMR" id="Q4X099"/>
<dbReference type="FunCoup" id="Q4X099">
    <property type="interactions" value="425"/>
</dbReference>
<dbReference type="STRING" id="330879.Q4X099"/>
<dbReference type="SwissPalm" id="Q4X099"/>
<dbReference type="EnsemblFungi" id="EAL93716">
    <property type="protein sequence ID" value="EAL93716"/>
    <property type="gene ID" value="AFUA_2G14210"/>
</dbReference>
<dbReference type="GeneID" id="3512998"/>
<dbReference type="KEGG" id="afm:AFUA_2G14210"/>
<dbReference type="VEuPathDB" id="FungiDB:Afu2g14210"/>
<dbReference type="eggNOG" id="KOG2448">
    <property type="taxonomic scope" value="Eukaryota"/>
</dbReference>
<dbReference type="HOGENOM" id="CLU_014271_4_2_1"/>
<dbReference type="InParanoid" id="Q4X099"/>
<dbReference type="OMA" id="STQGRNM"/>
<dbReference type="OrthoDB" id="3851628at2759"/>
<dbReference type="UniPathway" id="UPA00047">
    <property type="reaction ID" value="UER00057"/>
</dbReference>
<dbReference type="UniPathway" id="UPA00049">
    <property type="reaction ID" value="UER00061"/>
</dbReference>
<dbReference type="PHI-base" id="PHI:2638"/>
<dbReference type="Proteomes" id="UP000002530">
    <property type="component" value="Chromosome 2"/>
</dbReference>
<dbReference type="GO" id="GO:0005739">
    <property type="term" value="C:mitochondrion"/>
    <property type="evidence" value="ECO:0007669"/>
    <property type="project" value="UniProtKB-SubCell"/>
</dbReference>
<dbReference type="GO" id="GO:0051537">
    <property type="term" value="F:2 iron, 2 sulfur cluster binding"/>
    <property type="evidence" value="ECO:0007669"/>
    <property type="project" value="UniProtKB-KW"/>
</dbReference>
<dbReference type="GO" id="GO:0004160">
    <property type="term" value="F:dihydroxy-acid dehydratase activity"/>
    <property type="evidence" value="ECO:0000314"/>
    <property type="project" value="AspGD"/>
</dbReference>
<dbReference type="GO" id="GO:0046872">
    <property type="term" value="F:metal ion binding"/>
    <property type="evidence" value="ECO:0007669"/>
    <property type="project" value="UniProtKB-KW"/>
</dbReference>
<dbReference type="GO" id="GO:0009082">
    <property type="term" value="P:branched-chain amino acid biosynthetic process"/>
    <property type="evidence" value="ECO:0000315"/>
    <property type="project" value="AspGD"/>
</dbReference>
<dbReference type="GO" id="GO:0009097">
    <property type="term" value="P:isoleucine biosynthetic process"/>
    <property type="evidence" value="ECO:0007669"/>
    <property type="project" value="UniProtKB-UniPathway"/>
</dbReference>
<dbReference type="GO" id="GO:0009099">
    <property type="term" value="P:L-valine biosynthetic process"/>
    <property type="evidence" value="ECO:0007669"/>
    <property type="project" value="UniProtKB-UniPathway"/>
</dbReference>
<dbReference type="FunFam" id="3.50.30.80:FF:000001">
    <property type="entry name" value="Dihydroxy-acid dehydratase"/>
    <property type="match status" value="1"/>
</dbReference>
<dbReference type="Gene3D" id="3.50.30.80">
    <property type="entry name" value="IlvD/EDD C-terminal domain-like"/>
    <property type="match status" value="1"/>
</dbReference>
<dbReference type="HAMAP" id="MF_00012">
    <property type="entry name" value="IlvD"/>
    <property type="match status" value="1"/>
</dbReference>
<dbReference type="InterPro" id="IPR050165">
    <property type="entry name" value="DHAD_IlvD/Edd"/>
</dbReference>
<dbReference type="InterPro" id="IPR042096">
    <property type="entry name" value="Dihydro-acid_dehy_C"/>
</dbReference>
<dbReference type="InterPro" id="IPR004404">
    <property type="entry name" value="DihydroxyA_deHydtase"/>
</dbReference>
<dbReference type="InterPro" id="IPR020558">
    <property type="entry name" value="DiOHA_6PGluconate_deHydtase_CS"/>
</dbReference>
<dbReference type="InterPro" id="IPR056740">
    <property type="entry name" value="ILV_EDD_C"/>
</dbReference>
<dbReference type="InterPro" id="IPR000581">
    <property type="entry name" value="ILV_EDD_N"/>
</dbReference>
<dbReference type="InterPro" id="IPR037237">
    <property type="entry name" value="IlvD/EDD_N"/>
</dbReference>
<dbReference type="NCBIfam" id="TIGR00110">
    <property type="entry name" value="ilvD"/>
    <property type="match status" value="1"/>
</dbReference>
<dbReference type="NCBIfam" id="NF002068">
    <property type="entry name" value="PRK00911.1"/>
    <property type="match status" value="1"/>
</dbReference>
<dbReference type="PANTHER" id="PTHR21000">
    <property type="entry name" value="DIHYDROXY-ACID DEHYDRATASE DAD"/>
    <property type="match status" value="1"/>
</dbReference>
<dbReference type="PANTHER" id="PTHR21000:SF5">
    <property type="entry name" value="DIHYDROXY-ACID DEHYDRATASE, MITOCHONDRIAL"/>
    <property type="match status" value="1"/>
</dbReference>
<dbReference type="Pfam" id="PF24877">
    <property type="entry name" value="ILV_EDD_C"/>
    <property type="match status" value="1"/>
</dbReference>
<dbReference type="Pfam" id="PF00920">
    <property type="entry name" value="ILVD_EDD_N"/>
    <property type="match status" value="1"/>
</dbReference>
<dbReference type="SUPFAM" id="SSF143975">
    <property type="entry name" value="IlvD/EDD N-terminal domain-like"/>
    <property type="match status" value="1"/>
</dbReference>
<dbReference type="SUPFAM" id="SSF52016">
    <property type="entry name" value="LeuD/IlvD-like"/>
    <property type="match status" value="1"/>
</dbReference>
<dbReference type="PROSITE" id="PS00886">
    <property type="entry name" value="ILVD_EDD_1"/>
    <property type="match status" value="1"/>
</dbReference>
<dbReference type="PROSITE" id="PS00887">
    <property type="entry name" value="ILVD_EDD_2"/>
    <property type="match status" value="1"/>
</dbReference>
<reference key="1">
    <citation type="journal article" date="2005" name="Nature">
        <title>Genomic sequence of the pathogenic and allergenic filamentous fungus Aspergillus fumigatus.</title>
        <authorList>
            <person name="Nierman W.C."/>
            <person name="Pain A."/>
            <person name="Anderson M.J."/>
            <person name="Wortman J.R."/>
            <person name="Kim H.S."/>
            <person name="Arroyo J."/>
            <person name="Berriman M."/>
            <person name="Abe K."/>
            <person name="Archer D.B."/>
            <person name="Bermejo C."/>
            <person name="Bennett J.W."/>
            <person name="Bowyer P."/>
            <person name="Chen D."/>
            <person name="Collins M."/>
            <person name="Coulsen R."/>
            <person name="Davies R."/>
            <person name="Dyer P.S."/>
            <person name="Farman M.L."/>
            <person name="Fedorova N."/>
            <person name="Fedorova N.D."/>
            <person name="Feldblyum T.V."/>
            <person name="Fischer R."/>
            <person name="Fosker N."/>
            <person name="Fraser A."/>
            <person name="Garcia J.L."/>
            <person name="Garcia M.J."/>
            <person name="Goble A."/>
            <person name="Goldman G.H."/>
            <person name="Gomi K."/>
            <person name="Griffith-Jones S."/>
            <person name="Gwilliam R."/>
            <person name="Haas B.J."/>
            <person name="Haas H."/>
            <person name="Harris D.E."/>
            <person name="Horiuchi H."/>
            <person name="Huang J."/>
            <person name="Humphray S."/>
            <person name="Jimenez J."/>
            <person name="Keller N."/>
            <person name="Khouri H."/>
            <person name="Kitamoto K."/>
            <person name="Kobayashi T."/>
            <person name="Konzack S."/>
            <person name="Kulkarni R."/>
            <person name="Kumagai T."/>
            <person name="Lafton A."/>
            <person name="Latge J.-P."/>
            <person name="Li W."/>
            <person name="Lord A."/>
            <person name="Lu C."/>
            <person name="Majoros W.H."/>
            <person name="May G.S."/>
            <person name="Miller B.L."/>
            <person name="Mohamoud Y."/>
            <person name="Molina M."/>
            <person name="Monod M."/>
            <person name="Mouyna I."/>
            <person name="Mulligan S."/>
            <person name="Murphy L.D."/>
            <person name="O'Neil S."/>
            <person name="Paulsen I."/>
            <person name="Penalva M.A."/>
            <person name="Pertea M."/>
            <person name="Price C."/>
            <person name="Pritchard B.L."/>
            <person name="Quail M.A."/>
            <person name="Rabbinowitsch E."/>
            <person name="Rawlins N."/>
            <person name="Rajandream M.A."/>
            <person name="Reichard U."/>
            <person name="Renauld H."/>
            <person name="Robson G.D."/>
            <person name="Rodriguez de Cordoba S."/>
            <person name="Rodriguez-Pena J.M."/>
            <person name="Ronning C.M."/>
            <person name="Rutter S."/>
            <person name="Salzberg S.L."/>
            <person name="Sanchez M."/>
            <person name="Sanchez-Ferrero J.C."/>
            <person name="Saunders D."/>
            <person name="Seeger K."/>
            <person name="Squares R."/>
            <person name="Squares S."/>
            <person name="Takeuchi M."/>
            <person name="Tekaia F."/>
            <person name="Turner G."/>
            <person name="Vazquez de Aldana C.R."/>
            <person name="Weidman J."/>
            <person name="White O."/>
            <person name="Woodward J.R."/>
            <person name="Yu J.-H."/>
            <person name="Fraser C.M."/>
            <person name="Galagan J.E."/>
            <person name="Asai K."/>
            <person name="Machida M."/>
            <person name="Hall N."/>
            <person name="Barrell B.G."/>
            <person name="Denning D.W."/>
        </authorList>
    </citation>
    <scope>NUCLEOTIDE SEQUENCE [LARGE SCALE GENOMIC DNA]</scope>
    <source>
        <strain>ATCC MYA-4609 / CBS 101355 / FGSC A1100 / Af293</strain>
    </source>
</reference>
<reference key="2">
    <citation type="journal article" date="2012" name="PLoS ONE">
        <title>The Aspergillus fumigatus dihydroxyacid dehydratase Ilv3A/IlvC is required for full virulence.</title>
        <authorList>
            <person name="Oliver J.D."/>
            <person name="Kaye S.J."/>
            <person name="Tuckwell D."/>
            <person name="Johns A.E."/>
            <person name="Macdonald D.A."/>
            <person name="Livermore J."/>
            <person name="Warn P.A."/>
            <person name="Birch M."/>
            <person name="Bromley M.J."/>
        </authorList>
    </citation>
    <scope>FUNCTION</scope>
    <scope>DISRUPTION PHENOTYPE</scope>
    <scope>BIOPHYSICOCHEMICAL PROPERTIES</scope>
    <scope>ACTIVITY REGULATION</scope>
    <scope>PATHWAY</scope>
</reference>
<keyword id="KW-0001">2Fe-2S</keyword>
<keyword id="KW-0028">Amino-acid biosynthesis</keyword>
<keyword id="KW-0100">Branched-chain amino acid biosynthesis</keyword>
<keyword id="KW-0408">Iron</keyword>
<keyword id="KW-0411">Iron-sulfur</keyword>
<keyword id="KW-0456">Lyase</keyword>
<keyword id="KW-0460">Magnesium</keyword>
<keyword id="KW-0479">Metal-binding</keyword>
<keyword id="KW-0496">Mitochondrion</keyword>
<keyword id="KW-1185">Reference proteome</keyword>
<keyword id="KW-0843">Virulence</keyword>
<proteinExistence type="evidence at protein level"/>
<evidence type="ECO:0000250" key="1">
    <source>
        <dbReference type="UniProtKB" id="P05791"/>
    </source>
</evidence>
<evidence type="ECO:0000250" key="2">
    <source>
        <dbReference type="UniProtKB" id="P39522"/>
    </source>
</evidence>
<evidence type="ECO:0000250" key="3">
    <source>
        <dbReference type="UniProtKB" id="P9WKJ5"/>
    </source>
</evidence>
<evidence type="ECO:0000269" key="4">
    <source>
    </source>
</evidence>
<evidence type="ECO:0000303" key="5">
    <source>
    </source>
</evidence>
<evidence type="ECO:0000305" key="6"/>
<gene>
    <name evidence="5" type="primary">ilvC</name>
    <name evidence="5" type="synonym">ilv3A</name>
    <name type="ORF">AFUA_2G14210</name>
</gene>
<accession>Q4X099</accession>
<organism>
    <name type="scientific">Aspergillus fumigatus (strain ATCC MYA-4609 / CBS 101355 / FGSC A1100 / Af293)</name>
    <name type="common">Neosartorya fumigata</name>
    <dbReference type="NCBI Taxonomy" id="330879"/>
    <lineage>
        <taxon>Eukaryota</taxon>
        <taxon>Fungi</taxon>
        <taxon>Dikarya</taxon>
        <taxon>Ascomycota</taxon>
        <taxon>Pezizomycotina</taxon>
        <taxon>Eurotiomycetes</taxon>
        <taxon>Eurotiomycetidae</taxon>
        <taxon>Eurotiales</taxon>
        <taxon>Aspergillaceae</taxon>
        <taxon>Aspergillus</taxon>
        <taxon>Aspergillus subgen. Fumigati</taxon>
    </lineage>
</organism>
<sequence length="606" mass="64757">MLLSQTRGRLPSTLRSFSRRALSTTLPRGKDSEETALNKVSRNVTQPISQGASQAMLYATGLTEEDMNKAQVGISSVWYNGNPCNMHLLDLSNRVREGVQKAGLVGFQFNTVGVSDAISMGTKGMRYSLQSRDLIADSIETVMGGQWYDANISIPGCDKNMPGVLMAMGRVNRPSLMVYGGTIKPGCARTQNNADIDIVSAFQAYGQFLTGEITENQRFDIIRNACPGGGACGGMYTANTMATAIEVMGMTLPGSSSNPAESKAKDLECLAAGEAIKRLLKEDIRPSDILTRQAFENAMIVVNITGGSTNAVLHLIAIADSVGIKLDIEDFQKVSDRTPFLADLKPSGKYVMADLHNIGGTPSLLKFLLKEGVIDGSGMTVTGETLAKNLEKVPDFPADQKIIRPLSNPIKKTGHIQILRGSLAPGGSVGKITGKEGTRFVGKARVFDDEDDFIAALERNEIKKEEKTVVVIRYTGPKGGPGMPEMLKPSSALMGAGLGSSCALITDGRFSGGSHGFLIGHIVPEAAVGGPIGLVKDGDTITIDAEKRLLDLDVDETELARRRKEWEALRDAGKLPQTGLTMRGTLGKYARTVKDASHGCITDSVE</sequence>
<name>ILVC_ASPFU</name>
<protein>
    <recommendedName>
        <fullName evidence="5">Dihydroxy-acid dehydratase ilvC, mitochondrial</fullName>
        <shortName evidence="5">DHAD ilvC</shortName>
        <ecNumber evidence="2">4.2.1.9</ecNumber>
    </recommendedName>
</protein>